<accession>Q8N9F8</accession>
<accession>Q2M1P2</accession>
<accession>Q2M323</accession>
<comment type="function">
    <text>May be involved in transcriptional regulation.</text>
</comment>
<comment type="subcellular location">
    <subcellularLocation>
        <location evidence="7">Nucleus</location>
    </subcellularLocation>
</comment>
<comment type="similarity">
    <text evidence="7">Belongs to the krueppel C2H2-type zinc-finger protein family.</text>
</comment>
<organism>
    <name type="scientific">Homo sapiens</name>
    <name type="common">Human</name>
    <dbReference type="NCBI Taxonomy" id="9606"/>
    <lineage>
        <taxon>Eukaryota</taxon>
        <taxon>Metazoa</taxon>
        <taxon>Chordata</taxon>
        <taxon>Craniata</taxon>
        <taxon>Vertebrata</taxon>
        <taxon>Euteleostomi</taxon>
        <taxon>Mammalia</taxon>
        <taxon>Eutheria</taxon>
        <taxon>Euarchontoglires</taxon>
        <taxon>Primates</taxon>
        <taxon>Haplorrhini</taxon>
        <taxon>Catarrhini</taxon>
        <taxon>Hominidae</taxon>
        <taxon>Homo</taxon>
    </lineage>
</organism>
<proteinExistence type="evidence at protein level"/>
<gene>
    <name type="primary">ZNF454</name>
</gene>
<reference key="1">
    <citation type="journal article" date="2004" name="Nat. Genet.">
        <title>Complete sequencing and characterization of 21,243 full-length human cDNAs.</title>
        <authorList>
            <person name="Ota T."/>
            <person name="Suzuki Y."/>
            <person name="Nishikawa T."/>
            <person name="Otsuki T."/>
            <person name="Sugiyama T."/>
            <person name="Irie R."/>
            <person name="Wakamatsu A."/>
            <person name="Hayashi K."/>
            <person name="Sato H."/>
            <person name="Nagai K."/>
            <person name="Kimura K."/>
            <person name="Makita H."/>
            <person name="Sekine M."/>
            <person name="Obayashi M."/>
            <person name="Nishi T."/>
            <person name="Shibahara T."/>
            <person name="Tanaka T."/>
            <person name="Ishii S."/>
            <person name="Yamamoto J."/>
            <person name="Saito K."/>
            <person name="Kawai Y."/>
            <person name="Isono Y."/>
            <person name="Nakamura Y."/>
            <person name="Nagahari K."/>
            <person name="Murakami K."/>
            <person name="Yasuda T."/>
            <person name="Iwayanagi T."/>
            <person name="Wagatsuma M."/>
            <person name="Shiratori A."/>
            <person name="Sudo H."/>
            <person name="Hosoiri T."/>
            <person name="Kaku Y."/>
            <person name="Kodaira H."/>
            <person name="Kondo H."/>
            <person name="Sugawara M."/>
            <person name="Takahashi M."/>
            <person name="Kanda K."/>
            <person name="Yokoi T."/>
            <person name="Furuya T."/>
            <person name="Kikkawa E."/>
            <person name="Omura Y."/>
            <person name="Abe K."/>
            <person name="Kamihara K."/>
            <person name="Katsuta N."/>
            <person name="Sato K."/>
            <person name="Tanikawa M."/>
            <person name="Yamazaki M."/>
            <person name="Ninomiya K."/>
            <person name="Ishibashi T."/>
            <person name="Yamashita H."/>
            <person name="Murakawa K."/>
            <person name="Fujimori K."/>
            <person name="Tanai H."/>
            <person name="Kimata M."/>
            <person name="Watanabe M."/>
            <person name="Hiraoka S."/>
            <person name="Chiba Y."/>
            <person name="Ishida S."/>
            <person name="Ono Y."/>
            <person name="Takiguchi S."/>
            <person name="Watanabe S."/>
            <person name="Yosida M."/>
            <person name="Hotuta T."/>
            <person name="Kusano J."/>
            <person name="Kanehori K."/>
            <person name="Takahashi-Fujii A."/>
            <person name="Hara H."/>
            <person name="Tanase T.-O."/>
            <person name="Nomura Y."/>
            <person name="Togiya S."/>
            <person name="Komai F."/>
            <person name="Hara R."/>
            <person name="Takeuchi K."/>
            <person name="Arita M."/>
            <person name="Imose N."/>
            <person name="Musashino K."/>
            <person name="Yuuki H."/>
            <person name="Oshima A."/>
            <person name="Sasaki N."/>
            <person name="Aotsuka S."/>
            <person name="Yoshikawa Y."/>
            <person name="Matsunawa H."/>
            <person name="Ichihara T."/>
            <person name="Shiohata N."/>
            <person name="Sano S."/>
            <person name="Moriya S."/>
            <person name="Momiyama H."/>
            <person name="Satoh N."/>
            <person name="Takami S."/>
            <person name="Terashima Y."/>
            <person name="Suzuki O."/>
            <person name="Nakagawa S."/>
            <person name="Senoh A."/>
            <person name="Mizoguchi H."/>
            <person name="Goto Y."/>
            <person name="Shimizu F."/>
            <person name="Wakebe H."/>
            <person name="Hishigaki H."/>
            <person name="Watanabe T."/>
            <person name="Sugiyama A."/>
            <person name="Takemoto M."/>
            <person name="Kawakami B."/>
            <person name="Yamazaki M."/>
            <person name="Watanabe K."/>
            <person name="Kumagai A."/>
            <person name="Itakura S."/>
            <person name="Fukuzumi Y."/>
            <person name="Fujimori Y."/>
            <person name="Komiyama M."/>
            <person name="Tashiro H."/>
            <person name="Tanigami A."/>
            <person name="Fujiwara T."/>
            <person name="Ono T."/>
            <person name="Yamada K."/>
            <person name="Fujii Y."/>
            <person name="Ozaki K."/>
            <person name="Hirao M."/>
            <person name="Ohmori Y."/>
            <person name="Kawabata A."/>
            <person name="Hikiji T."/>
            <person name="Kobatake N."/>
            <person name="Inagaki H."/>
            <person name="Ikema Y."/>
            <person name="Okamoto S."/>
            <person name="Okitani R."/>
            <person name="Kawakami T."/>
            <person name="Noguchi S."/>
            <person name="Itoh T."/>
            <person name="Shigeta K."/>
            <person name="Senba T."/>
            <person name="Matsumura K."/>
            <person name="Nakajima Y."/>
            <person name="Mizuno T."/>
            <person name="Morinaga M."/>
            <person name="Sasaki M."/>
            <person name="Togashi T."/>
            <person name="Oyama M."/>
            <person name="Hata H."/>
            <person name="Watanabe M."/>
            <person name="Komatsu T."/>
            <person name="Mizushima-Sugano J."/>
            <person name="Satoh T."/>
            <person name="Shirai Y."/>
            <person name="Takahashi Y."/>
            <person name="Nakagawa K."/>
            <person name="Okumura K."/>
            <person name="Nagase T."/>
            <person name="Nomura N."/>
            <person name="Kikuchi H."/>
            <person name="Masuho Y."/>
            <person name="Yamashita R."/>
            <person name="Nakai K."/>
            <person name="Yada T."/>
            <person name="Nakamura Y."/>
            <person name="Ohara O."/>
            <person name="Isogai T."/>
            <person name="Sugano S."/>
        </authorList>
    </citation>
    <scope>NUCLEOTIDE SEQUENCE [LARGE SCALE MRNA]</scope>
    <scope>VARIANTS TYR-152 AND ALA-166</scope>
    <source>
        <tissue>Brain</tissue>
        <tissue>Testis</tissue>
    </source>
</reference>
<reference key="2">
    <citation type="journal article" date="2004" name="Nature">
        <title>The DNA sequence and comparative analysis of human chromosome 5.</title>
        <authorList>
            <person name="Schmutz J."/>
            <person name="Martin J."/>
            <person name="Terry A."/>
            <person name="Couronne O."/>
            <person name="Grimwood J."/>
            <person name="Lowry S."/>
            <person name="Gordon L.A."/>
            <person name="Scott D."/>
            <person name="Xie G."/>
            <person name="Huang W."/>
            <person name="Hellsten U."/>
            <person name="Tran-Gyamfi M."/>
            <person name="She X."/>
            <person name="Prabhakar S."/>
            <person name="Aerts A."/>
            <person name="Altherr M."/>
            <person name="Bajorek E."/>
            <person name="Black S."/>
            <person name="Branscomb E."/>
            <person name="Caoile C."/>
            <person name="Challacombe J.F."/>
            <person name="Chan Y.M."/>
            <person name="Denys M."/>
            <person name="Detter J.C."/>
            <person name="Escobar J."/>
            <person name="Flowers D."/>
            <person name="Fotopulos D."/>
            <person name="Glavina T."/>
            <person name="Gomez M."/>
            <person name="Gonzales E."/>
            <person name="Goodstein D."/>
            <person name="Grigoriev I."/>
            <person name="Groza M."/>
            <person name="Hammon N."/>
            <person name="Hawkins T."/>
            <person name="Haydu L."/>
            <person name="Israni S."/>
            <person name="Jett J."/>
            <person name="Kadner K."/>
            <person name="Kimball H."/>
            <person name="Kobayashi A."/>
            <person name="Lopez F."/>
            <person name="Lou Y."/>
            <person name="Martinez D."/>
            <person name="Medina C."/>
            <person name="Morgan J."/>
            <person name="Nandkeshwar R."/>
            <person name="Noonan J.P."/>
            <person name="Pitluck S."/>
            <person name="Pollard M."/>
            <person name="Predki P."/>
            <person name="Priest J."/>
            <person name="Ramirez L."/>
            <person name="Retterer J."/>
            <person name="Rodriguez A."/>
            <person name="Rogers S."/>
            <person name="Salamov A."/>
            <person name="Salazar A."/>
            <person name="Thayer N."/>
            <person name="Tice H."/>
            <person name="Tsai M."/>
            <person name="Ustaszewska A."/>
            <person name="Vo N."/>
            <person name="Wheeler J."/>
            <person name="Wu K."/>
            <person name="Yang J."/>
            <person name="Dickson M."/>
            <person name="Cheng J.-F."/>
            <person name="Eichler E.E."/>
            <person name="Olsen A."/>
            <person name="Pennacchio L.A."/>
            <person name="Rokhsar D.S."/>
            <person name="Richardson P."/>
            <person name="Lucas S.M."/>
            <person name="Myers R.M."/>
            <person name="Rubin E.M."/>
        </authorList>
    </citation>
    <scope>NUCLEOTIDE SEQUENCE [LARGE SCALE GENOMIC DNA]</scope>
</reference>
<reference key="3">
    <citation type="submission" date="2005-09" db="EMBL/GenBank/DDBJ databases">
        <authorList>
            <person name="Mural R.J."/>
            <person name="Istrail S."/>
            <person name="Sutton G."/>
            <person name="Florea L."/>
            <person name="Halpern A.L."/>
            <person name="Mobarry C.M."/>
            <person name="Lippert R."/>
            <person name="Walenz B."/>
            <person name="Shatkay H."/>
            <person name="Dew I."/>
            <person name="Miller J.R."/>
            <person name="Flanigan M.J."/>
            <person name="Edwards N.J."/>
            <person name="Bolanos R."/>
            <person name="Fasulo D."/>
            <person name="Halldorsson B.V."/>
            <person name="Hannenhalli S."/>
            <person name="Turner R."/>
            <person name="Yooseph S."/>
            <person name="Lu F."/>
            <person name="Nusskern D.R."/>
            <person name="Shue B.C."/>
            <person name="Zheng X.H."/>
            <person name="Zhong F."/>
            <person name="Delcher A.L."/>
            <person name="Huson D.H."/>
            <person name="Kravitz S.A."/>
            <person name="Mouchard L."/>
            <person name="Reinert K."/>
            <person name="Remington K.A."/>
            <person name="Clark A.G."/>
            <person name="Waterman M.S."/>
            <person name="Eichler E.E."/>
            <person name="Adams M.D."/>
            <person name="Hunkapiller M.W."/>
            <person name="Myers E.W."/>
            <person name="Venter J.C."/>
        </authorList>
    </citation>
    <scope>NUCLEOTIDE SEQUENCE [LARGE SCALE GENOMIC DNA]</scope>
    <scope>VARIANT ALA-166</scope>
</reference>
<reference key="4">
    <citation type="journal article" date="2004" name="Genome Res.">
        <title>The status, quality, and expansion of the NIH full-length cDNA project: the Mammalian Gene Collection (MGC).</title>
        <authorList>
            <consortium name="The MGC Project Team"/>
        </authorList>
    </citation>
    <scope>NUCLEOTIDE SEQUENCE [LARGE SCALE MRNA]</scope>
    <scope>VARIANTS TYR-152 AND ALA-166</scope>
    <source>
        <tissue>Cerebellum</tissue>
    </source>
</reference>
<feature type="chain" id="PRO_0000047600" description="Zinc finger protein 454">
    <location>
        <begin position="1"/>
        <end position="522"/>
    </location>
</feature>
<feature type="domain" description="KRAB" evidence="2">
    <location>
        <begin position="14"/>
        <end position="84"/>
    </location>
</feature>
<feature type="zinc finger region" description="C2H2-type 1" evidence="1">
    <location>
        <begin position="178"/>
        <end position="200"/>
    </location>
</feature>
<feature type="zinc finger region" description="C2H2-type 2" evidence="1">
    <location>
        <begin position="216"/>
        <end position="238"/>
    </location>
</feature>
<feature type="zinc finger region" description="C2H2-type 3" evidence="1">
    <location>
        <begin position="244"/>
        <end position="266"/>
    </location>
</feature>
<feature type="zinc finger region" description="C2H2-type 4" evidence="1">
    <location>
        <begin position="272"/>
        <end position="294"/>
    </location>
</feature>
<feature type="zinc finger region" description="C2H2-type 5" evidence="1">
    <location>
        <begin position="300"/>
        <end position="322"/>
    </location>
</feature>
<feature type="zinc finger region" description="C2H2-type 6" evidence="1">
    <location>
        <begin position="328"/>
        <end position="350"/>
    </location>
</feature>
<feature type="zinc finger region" description="C2H2-type 7" evidence="1">
    <location>
        <begin position="356"/>
        <end position="378"/>
    </location>
</feature>
<feature type="zinc finger region" description="C2H2-type 8" evidence="1">
    <location>
        <begin position="384"/>
        <end position="406"/>
    </location>
</feature>
<feature type="zinc finger region" description="C2H2-type 9" evidence="1">
    <location>
        <begin position="412"/>
        <end position="434"/>
    </location>
</feature>
<feature type="zinc finger region" description="C2H2-type 10" evidence="1">
    <location>
        <begin position="440"/>
        <end position="462"/>
    </location>
</feature>
<feature type="zinc finger region" description="C2H2-type 11" evidence="1">
    <location>
        <begin position="468"/>
        <end position="490"/>
    </location>
</feature>
<feature type="zinc finger region" description="C2H2-type 12" evidence="1">
    <location>
        <begin position="496"/>
        <end position="518"/>
    </location>
</feature>
<feature type="region of interest" description="Disordered" evidence="3">
    <location>
        <begin position="147"/>
        <end position="170"/>
    </location>
</feature>
<feature type="sequence variant" id="VAR_059919" description="In dbSNP:rs6867221." evidence="4 5">
    <original>C</original>
    <variation>Y</variation>
    <location>
        <position position="152"/>
    </location>
</feature>
<feature type="sequence variant" id="VAR_033568" description="In dbSNP:rs12719860." evidence="4 5 6">
    <original>D</original>
    <variation>A</variation>
    <location>
        <position position="166"/>
    </location>
</feature>
<keyword id="KW-0238">DNA-binding</keyword>
<keyword id="KW-0479">Metal-binding</keyword>
<keyword id="KW-0539">Nucleus</keyword>
<keyword id="KW-1267">Proteomics identification</keyword>
<keyword id="KW-1185">Reference proteome</keyword>
<keyword id="KW-0677">Repeat</keyword>
<keyword id="KW-0804">Transcription</keyword>
<keyword id="KW-0805">Transcription regulation</keyword>
<keyword id="KW-0862">Zinc</keyword>
<keyword id="KW-0863">Zinc-finger</keyword>
<evidence type="ECO:0000255" key="1">
    <source>
        <dbReference type="PROSITE-ProRule" id="PRU00042"/>
    </source>
</evidence>
<evidence type="ECO:0000255" key="2">
    <source>
        <dbReference type="PROSITE-ProRule" id="PRU00119"/>
    </source>
</evidence>
<evidence type="ECO:0000256" key="3">
    <source>
        <dbReference type="SAM" id="MobiDB-lite"/>
    </source>
</evidence>
<evidence type="ECO:0000269" key="4">
    <source>
    </source>
</evidence>
<evidence type="ECO:0000269" key="5">
    <source>
    </source>
</evidence>
<evidence type="ECO:0000269" key="6">
    <source ref="3"/>
</evidence>
<evidence type="ECO:0000305" key="7"/>
<name>ZN454_HUMAN</name>
<sequence>MAVSHLPTMVQESVTFKDVAILFTQEEWGQLSPAQRALYRDVMLENYSNLVSLGLLGPKPDTFSQLEKREVWMPEDTPGGFCLDWMTMPASKKSTVKAEIPEEELDQWTIKERFSSSSHWKCASLLEWQCGGQEISLQRVVLTHPNTPSQECDESGSTMSSSLHSDQSQGFQPSKNAFECSECGKVFSKSSTLNKHQKIHNEKNANQKIHIKEKRYECRECGKAFHQSTHLIHHQRIHTGEKPYECKECGKAFSVSSSLTYHQKIHTGEKPFECNLCGKAFIRNIHLAHHHRIHTGEKPFKCNICEKAFVCRAHLTKHQNIHSGEKPYKCNECGKAFNQSTSFLQHQRIHTGEKPFECNECGKAFRVNSSLTEHQRIHTGEKPYKCNECGKAFRDNSSFARHRKIHTGEKPYRCGLCEKAFRDQSALAQHQRIHTGEKPYTCNICEKAFSDHSALTQHKRIHTREKPYKCKICEKAFIRSTHLTQHQRIHTGEKPYKCNKCGKAFNQTANLIQHQRHHIGEK</sequence>
<dbReference type="EMBL" id="AK094763">
    <property type="protein sequence ID" value="BAC04418.1"/>
    <property type="molecule type" value="mRNA"/>
</dbReference>
<dbReference type="EMBL" id="AK292317">
    <property type="protein sequence ID" value="BAF85006.1"/>
    <property type="molecule type" value="mRNA"/>
</dbReference>
<dbReference type="EMBL" id="AC104117">
    <property type="status" value="NOT_ANNOTATED_CDS"/>
    <property type="molecule type" value="Genomic_DNA"/>
</dbReference>
<dbReference type="EMBL" id="CH471165">
    <property type="protein sequence ID" value="EAW53822.1"/>
    <property type="molecule type" value="Genomic_DNA"/>
</dbReference>
<dbReference type="EMBL" id="CH471165">
    <property type="protein sequence ID" value="EAW53823.1"/>
    <property type="molecule type" value="Genomic_DNA"/>
</dbReference>
<dbReference type="EMBL" id="CH471165">
    <property type="protein sequence ID" value="EAW53824.1"/>
    <property type="molecule type" value="Genomic_DNA"/>
</dbReference>
<dbReference type="EMBL" id="BC105061">
    <property type="protein sequence ID" value="AAI05062.1"/>
    <property type="molecule type" value="mRNA"/>
</dbReference>
<dbReference type="EMBL" id="BC112276">
    <property type="protein sequence ID" value="AAI12277.1"/>
    <property type="molecule type" value="mRNA"/>
</dbReference>
<dbReference type="CCDS" id="CCDS4441.1"/>
<dbReference type="RefSeq" id="NP_001171560.1">
    <property type="nucleotide sequence ID" value="NM_001178089.3"/>
</dbReference>
<dbReference type="RefSeq" id="NP_001171561.1">
    <property type="nucleotide sequence ID" value="NM_001178090.3"/>
</dbReference>
<dbReference type="RefSeq" id="NP_001310235.1">
    <property type="nucleotide sequence ID" value="NM_001323306.2"/>
</dbReference>
<dbReference type="RefSeq" id="NP_872400.2">
    <property type="nucleotide sequence ID" value="NM_182594.4"/>
</dbReference>
<dbReference type="SMR" id="Q8N9F8"/>
<dbReference type="BioGRID" id="130176">
    <property type="interactions" value="5"/>
</dbReference>
<dbReference type="STRING" id="9606.ENSP00000326249"/>
<dbReference type="GlyGen" id="Q8N9F8">
    <property type="glycosylation" value="1 site, 1 O-linked glycan (1 site)"/>
</dbReference>
<dbReference type="iPTMnet" id="Q8N9F8"/>
<dbReference type="PhosphoSitePlus" id="Q8N9F8"/>
<dbReference type="BioMuta" id="ZNF454"/>
<dbReference type="DMDM" id="269849529"/>
<dbReference type="jPOST" id="Q8N9F8"/>
<dbReference type="MassIVE" id="Q8N9F8"/>
<dbReference type="PaxDb" id="9606-ENSP00000326249"/>
<dbReference type="PeptideAtlas" id="Q8N9F8"/>
<dbReference type="ProteomicsDB" id="72529"/>
<dbReference type="Antibodypedia" id="17628">
    <property type="antibodies" value="130 antibodies from 15 providers"/>
</dbReference>
<dbReference type="DNASU" id="285676"/>
<dbReference type="Ensembl" id="ENST00000320129.7">
    <property type="protein sequence ID" value="ENSP00000326249.3"/>
    <property type="gene ID" value="ENSG00000178187.8"/>
</dbReference>
<dbReference type="Ensembl" id="ENST00000519564.2">
    <property type="protein sequence ID" value="ENSP00000430354.1"/>
    <property type="gene ID" value="ENSG00000178187.8"/>
</dbReference>
<dbReference type="GeneID" id="285676"/>
<dbReference type="KEGG" id="hsa:285676"/>
<dbReference type="MANE-Select" id="ENST00000519564.2">
    <property type="protein sequence ID" value="ENSP00000430354.1"/>
    <property type="RefSeq nucleotide sequence ID" value="NM_001178089.3"/>
    <property type="RefSeq protein sequence ID" value="NP_001171560.1"/>
</dbReference>
<dbReference type="UCSC" id="uc003mjo.3">
    <property type="organism name" value="human"/>
</dbReference>
<dbReference type="AGR" id="HGNC:21200"/>
<dbReference type="CTD" id="285676"/>
<dbReference type="DisGeNET" id="285676"/>
<dbReference type="GeneCards" id="ZNF454"/>
<dbReference type="HGNC" id="HGNC:21200">
    <property type="gene designation" value="ZNF454"/>
</dbReference>
<dbReference type="HPA" id="ENSG00000178187">
    <property type="expression patterns" value="Low tissue specificity"/>
</dbReference>
<dbReference type="MalaCards" id="ZNF454"/>
<dbReference type="neXtProt" id="NX_Q8N9F8"/>
<dbReference type="OpenTargets" id="ENSG00000178187"/>
<dbReference type="PharmGKB" id="PA134974337"/>
<dbReference type="VEuPathDB" id="HostDB:ENSG00000178187"/>
<dbReference type="eggNOG" id="KOG1721">
    <property type="taxonomic scope" value="Eukaryota"/>
</dbReference>
<dbReference type="GeneTree" id="ENSGT00940000162181"/>
<dbReference type="HOGENOM" id="CLU_002678_44_0_1"/>
<dbReference type="InParanoid" id="Q8N9F8"/>
<dbReference type="OMA" id="CDESGKH"/>
<dbReference type="OrthoDB" id="1095242at2759"/>
<dbReference type="PAN-GO" id="Q8N9F8">
    <property type="GO annotations" value="4 GO annotations based on evolutionary models"/>
</dbReference>
<dbReference type="PhylomeDB" id="Q8N9F8"/>
<dbReference type="TreeFam" id="TF336820"/>
<dbReference type="PathwayCommons" id="Q8N9F8"/>
<dbReference type="Reactome" id="R-HSA-212436">
    <property type="pathway name" value="Generic Transcription Pathway"/>
</dbReference>
<dbReference type="Reactome" id="R-HSA-9843940">
    <property type="pathway name" value="Regulation of endogenous retroelements by KRAB-ZFP proteins"/>
</dbReference>
<dbReference type="BioGRID-ORCS" id="285676">
    <property type="hits" value="6 hits in 1169 CRISPR screens"/>
</dbReference>
<dbReference type="GenomeRNAi" id="285676"/>
<dbReference type="Pharos" id="Q8N9F8">
    <property type="development level" value="Tdark"/>
</dbReference>
<dbReference type="PRO" id="PR:Q8N9F8"/>
<dbReference type="Proteomes" id="UP000005640">
    <property type="component" value="Chromosome 5"/>
</dbReference>
<dbReference type="RNAct" id="Q8N9F8">
    <property type="molecule type" value="protein"/>
</dbReference>
<dbReference type="Bgee" id="ENSG00000178187">
    <property type="expression patterns" value="Expressed in primordial germ cell in gonad and 109 other cell types or tissues"/>
</dbReference>
<dbReference type="GO" id="GO:0005634">
    <property type="term" value="C:nucleus"/>
    <property type="evidence" value="ECO:0000318"/>
    <property type="project" value="GO_Central"/>
</dbReference>
<dbReference type="GO" id="GO:0000981">
    <property type="term" value="F:DNA-binding transcription factor activity, RNA polymerase II-specific"/>
    <property type="evidence" value="ECO:0000318"/>
    <property type="project" value="GO_Central"/>
</dbReference>
<dbReference type="GO" id="GO:0000978">
    <property type="term" value="F:RNA polymerase II cis-regulatory region sequence-specific DNA binding"/>
    <property type="evidence" value="ECO:0000318"/>
    <property type="project" value="GO_Central"/>
</dbReference>
<dbReference type="GO" id="GO:1990837">
    <property type="term" value="F:sequence-specific double-stranded DNA binding"/>
    <property type="evidence" value="ECO:0000314"/>
    <property type="project" value="ARUK-UCL"/>
</dbReference>
<dbReference type="GO" id="GO:0008270">
    <property type="term" value="F:zinc ion binding"/>
    <property type="evidence" value="ECO:0007669"/>
    <property type="project" value="UniProtKB-KW"/>
</dbReference>
<dbReference type="GO" id="GO:0006357">
    <property type="term" value="P:regulation of transcription by RNA polymerase II"/>
    <property type="evidence" value="ECO:0000318"/>
    <property type="project" value="GO_Central"/>
</dbReference>
<dbReference type="CDD" id="cd07765">
    <property type="entry name" value="KRAB_A-box"/>
    <property type="match status" value="1"/>
</dbReference>
<dbReference type="FunFam" id="3.30.160.60:FF:004137">
    <property type="match status" value="1"/>
</dbReference>
<dbReference type="FunFam" id="3.30.160.60:FF:000688">
    <property type="entry name" value="zinc finger protein 197 isoform X1"/>
    <property type="match status" value="1"/>
</dbReference>
<dbReference type="FunFam" id="3.30.160.60:FF:002343">
    <property type="entry name" value="Zinc finger protein 33A"/>
    <property type="match status" value="2"/>
</dbReference>
<dbReference type="FunFam" id="3.30.160.60:FF:002402">
    <property type="entry name" value="Zinc finger protein 347"/>
    <property type="match status" value="1"/>
</dbReference>
<dbReference type="FunFam" id="3.30.160.60:FF:000690">
    <property type="entry name" value="Zinc finger protein 354C"/>
    <property type="match status" value="2"/>
</dbReference>
<dbReference type="FunFam" id="3.30.160.60:FF:001764">
    <property type="entry name" value="zinc finger protein 454 isoform X1"/>
    <property type="match status" value="1"/>
</dbReference>
<dbReference type="FunFam" id="3.30.160.60:FF:002254">
    <property type="entry name" value="Zinc finger protein 540"/>
    <property type="match status" value="1"/>
</dbReference>
<dbReference type="FunFam" id="3.30.160.60:FF:000052">
    <property type="entry name" value="zinc finger protein 546 isoform X1"/>
    <property type="match status" value="1"/>
</dbReference>
<dbReference type="FunFam" id="3.30.160.60:FF:000737">
    <property type="entry name" value="Zinc finger protein 565"/>
    <property type="match status" value="2"/>
</dbReference>
<dbReference type="FunFam" id="3.30.160.60:FF:000934">
    <property type="entry name" value="zinc finger protein 90 homolog"/>
    <property type="match status" value="1"/>
</dbReference>
<dbReference type="Gene3D" id="6.10.140.140">
    <property type="match status" value="1"/>
</dbReference>
<dbReference type="Gene3D" id="3.30.160.60">
    <property type="entry name" value="Classic Zinc Finger"/>
    <property type="match status" value="12"/>
</dbReference>
<dbReference type="InterPro" id="IPR001909">
    <property type="entry name" value="KRAB"/>
</dbReference>
<dbReference type="InterPro" id="IPR036051">
    <property type="entry name" value="KRAB_dom_sf"/>
</dbReference>
<dbReference type="InterPro" id="IPR036236">
    <property type="entry name" value="Znf_C2H2_sf"/>
</dbReference>
<dbReference type="InterPro" id="IPR013087">
    <property type="entry name" value="Znf_C2H2_type"/>
</dbReference>
<dbReference type="PANTHER" id="PTHR23226">
    <property type="entry name" value="ZINC FINGER AND SCAN DOMAIN-CONTAINING"/>
    <property type="match status" value="1"/>
</dbReference>
<dbReference type="PANTHER" id="PTHR23226:SF366">
    <property type="entry name" value="ZINC FINGER PROTEIN ZFP2"/>
    <property type="match status" value="1"/>
</dbReference>
<dbReference type="Pfam" id="PF01352">
    <property type="entry name" value="KRAB"/>
    <property type="match status" value="1"/>
</dbReference>
<dbReference type="Pfam" id="PF00096">
    <property type="entry name" value="zf-C2H2"/>
    <property type="match status" value="12"/>
</dbReference>
<dbReference type="SMART" id="SM00349">
    <property type="entry name" value="KRAB"/>
    <property type="match status" value="1"/>
</dbReference>
<dbReference type="SMART" id="SM00355">
    <property type="entry name" value="ZnF_C2H2"/>
    <property type="match status" value="12"/>
</dbReference>
<dbReference type="SUPFAM" id="SSF57667">
    <property type="entry name" value="beta-beta-alpha zinc fingers"/>
    <property type="match status" value="7"/>
</dbReference>
<dbReference type="SUPFAM" id="SSF109640">
    <property type="entry name" value="KRAB domain (Kruppel-associated box)"/>
    <property type="match status" value="1"/>
</dbReference>
<dbReference type="PROSITE" id="PS50805">
    <property type="entry name" value="KRAB"/>
    <property type="match status" value="1"/>
</dbReference>
<dbReference type="PROSITE" id="PS00028">
    <property type="entry name" value="ZINC_FINGER_C2H2_1"/>
    <property type="match status" value="12"/>
</dbReference>
<dbReference type="PROSITE" id="PS50157">
    <property type="entry name" value="ZINC_FINGER_C2H2_2"/>
    <property type="match status" value="12"/>
</dbReference>
<protein>
    <recommendedName>
        <fullName>Zinc finger protein 454</fullName>
    </recommendedName>
</protein>